<organism>
    <name type="scientific">Mycobacterium tuberculosis (strain ATCC 25618 / H37Rv)</name>
    <dbReference type="NCBI Taxonomy" id="83332"/>
    <lineage>
        <taxon>Bacteria</taxon>
        <taxon>Bacillati</taxon>
        <taxon>Actinomycetota</taxon>
        <taxon>Actinomycetes</taxon>
        <taxon>Mycobacteriales</taxon>
        <taxon>Mycobacteriaceae</taxon>
        <taxon>Mycobacterium</taxon>
        <taxon>Mycobacterium tuberculosis complex</taxon>
    </lineage>
</organism>
<keyword id="KW-1185">Reference proteome</keyword>
<protein>
    <recommendedName>
        <fullName>Isoniazid-induced protein IniC</fullName>
    </recommendedName>
</protein>
<feature type="chain" id="PRO_0000390793" description="Isoniazid-induced protein IniC">
    <location>
        <begin position="1"/>
        <end position="493"/>
    </location>
</feature>
<dbReference type="EMBL" id="AL123456">
    <property type="protein sequence ID" value="CCP43073.1"/>
    <property type="molecule type" value="Genomic_DNA"/>
</dbReference>
<dbReference type="PIR" id="H70573">
    <property type="entry name" value="H70573"/>
</dbReference>
<dbReference type="RefSeq" id="NP_214857.1">
    <property type="nucleotide sequence ID" value="NC_000962.3"/>
</dbReference>
<dbReference type="RefSeq" id="WP_003401747.1">
    <property type="nucleotide sequence ID" value="NZ_NVQJ01000002.1"/>
</dbReference>
<dbReference type="STRING" id="83332.Rv0343"/>
<dbReference type="TCDB" id="9.B.282.1.1">
    <property type="family name" value="the isoniazid-resistance (iniabc) family"/>
</dbReference>
<dbReference type="PaxDb" id="83332-Rv0343"/>
<dbReference type="DNASU" id="886508"/>
<dbReference type="GeneID" id="45424309"/>
<dbReference type="GeneID" id="886508"/>
<dbReference type="KEGG" id="mtu:Rv0343"/>
<dbReference type="KEGG" id="mtv:RVBD_0343"/>
<dbReference type="TubercuList" id="Rv0343"/>
<dbReference type="eggNOG" id="COG0699">
    <property type="taxonomic scope" value="Bacteria"/>
</dbReference>
<dbReference type="InParanoid" id="P9WJ95"/>
<dbReference type="OrthoDB" id="4379468at2"/>
<dbReference type="Proteomes" id="UP000001584">
    <property type="component" value="Chromosome"/>
</dbReference>
<dbReference type="GO" id="GO:0005829">
    <property type="term" value="C:cytosol"/>
    <property type="evidence" value="ECO:0007005"/>
    <property type="project" value="MTBBASE"/>
</dbReference>
<dbReference type="GO" id="GO:0005886">
    <property type="term" value="C:plasma membrane"/>
    <property type="evidence" value="ECO:0007005"/>
    <property type="project" value="MTBBASE"/>
</dbReference>
<dbReference type="Gene3D" id="3.40.50.300">
    <property type="entry name" value="P-loop containing nucleotide triphosphate hydrolases"/>
    <property type="match status" value="1"/>
</dbReference>
<dbReference type="InterPro" id="IPR045063">
    <property type="entry name" value="Dynamin_N"/>
</dbReference>
<dbReference type="InterPro" id="IPR027417">
    <property type="entry name" value="P-loop_NTPase"/>
</dbReference>
<dbReference type="InterPro" id="IPR051943">
    <property type="entry name" value="TRAFAC_Dynamin-like_GTPase"/>
</dbReference>
<dbReference type="PANTHER" id="PTHR43681:SF1">
    <property type="entry name" value="SARCALUMENIN"/>
    <property type="match status" value="1"/>
</dbReference>
<dbReference type="PANTHER" id="PTHR43681">
    <property type="entry name" value="TRANSMEMBRANE GTPASE FZO"/>
    <property type="match status" value="1"/>
</dbReference>
<dbReference type="Pfam" id="PF00350">
    <property type="entry name" value="Dynamin_N"/>
    <property type="match status" value="1"/>
</dbReference>
<dbReference type="SUPFAM" id="SSF52540">
    <property type="entry name" value="P-loop containing nucleoside triphosphate hydrolases"/>
    <property type="match status" value="1"/>
</dbReference>
<accession>P9WJ95</accession>
<accession>L0T663</accession>
<accession>O06294</accession>
<accession>Q7D9Z5</accession>
<name>INIC_MYCTU</name>
<gene>
    <name type="primary">iniC</name>
    <name type="ordered locus">Rv0343</name>
</gene>
<evidence type="ECO:0000269" key="1">
    <source>
    </source>
</evidence>
<evidence type="ECO:0000269" key="2">
    <source>
    </source>
</evidence>
<sequence length="493" mass="53019">MSTSDRVRAILHATIQAYRGAPAYRQRGDVFCQLDRIGARLAEPLRIALAGTLKAGKSTLVNALVGDDIAPTDATEATRIVTWFRHGPTPRVTANHRGGRRANVPITRRGGLSFDLRRINPAELIDLEVEWPAEELIDATIVDTPGTSSLACDASERTLRLLVPADGVPRVDAVVFLLRTLNAADVALLKQIGGLVGGSVGALGIIGVASRADEIGAGRIDAMLSANDVAKRFTRELNQMGICQAVVPVSGLLALTARTLRQTEFIALRKLAGAERTELNRALLSVDRFVRRDSPLPVDAGIRAQLLERFGMFGIRMSIAVLAAGVTDSTGLAAELLERSGLVALRNVIDQQFAQRSDMLKAHTALVSLRRFVQTHPVPATPYVIADIDPLLADTHAFEELRMLSLLPSRATTLNDDEIASLRRIIGGSGTSAAARLGLDPANSREAPRAALAAAQHWRRRAAHPLNDPFTTRACRAAVRSAEAMVAEFSARR</sequence>
<reference key="1">
    <citation type="journal article" date="1998" name="Nature">
        <title>Deciphering the biology of Mycobacterium tuberculosis from the complete genome sequence.</title>
        <authorList>
            <person name="Cole S.T."/>
            <person name="Brosch R."/>
            <person name="Parkhill J."/>
            <person name="Garnier T."/>
            <person name="Churcher C.M."/>
            <person name="Harris D.E."/>
            <person name="Gordon S.V."/>
            <person name="Eiglmeier K."/>
            <person name="Gas S."/>
            <person name="Barry C.E. III"/>
            <person name="Tekaia F."/>
            <person name="Badcock K."/>
            <person name="Basham D."/>
            <person name="Brown D."/>
            <person name="Chillingworth T."/>
            <person name="Connor R."/>
            <person name="Davies R.M."/>
            <person name="Devlin K."/>
            <person name="Feltwell T."/>
            <person name="Gentles S."/>
            <person name="Hamlin N."/>
            <person name="Holroyd S."/>
            <person name="Hornsby T."/>
            <person name="Jagels K."/>
            <person name="Krogh A."/>
            <person name="McLean J."/>
            <person name="Moule S."/>
            <person name="Murphy L.D."/>
            <person name="Oliver S."/>
            <person name="Osborne J."/>
            <person name="Quail M.A."/>
            <person name="Rajandream M.A."/>
            <person name="Rogers J."/>
            <person name="Rutter S."/>
            <person name="Seeger K."/>
            <person name="Skelton S."/>
            <person name="Squares S."/>
            <person name="Squares R."/>
            <person name="Sulston J.E."/>
            <person name="Taylor K."/>
            <person name="Whitehead S."/>
            <person name="Barrell B.G."/>
        </authorList>
    </citation>
    <scope>NUCLEOTIDE SEQUENCE [LARGE SCALE GENOMIC DNA]</scope>
    <source>
        <strain>ATCC 25618 / H37Rv</strain>
    </source>
</reference>
<reference key="2">
    <citation type="journal article" date="2000" name="J. Bacteriol.">
        <title>Characterization of the Mycobacterium tuberculosis iniBAC promoter, a promoter that responds to cell wall biosynthesis inhibition.</title>
        <authorList>
            <person name="Alland D."/>
            <person name="Steyn A.J."/>
            <person name="Weisbrod T."/>
            <person name="Aldrich K."/>
            <person name="Jacobs W.R. Jr."/>
        </authorList>
    </citation>
    <scope>INDUCTION</scope>
</reference>
<reference key="3">
    <citation type="journal article" date="2007" name="PLoS Pathog.">
        <title>Transcriptional regulation of multi-drug tolerance and antibiotic-induced responses by the histone-like protein Lsr2 in M. tuberculosis.</title>
        <authorList>
            <person name="Colangeli R."/>
            <person name="Helb D."/>
            <person name="Vilcheze C."/>
            <person name="Hazbon M.H."/>
            <person name="Lee C.G."/>
            <person name="Safi H."/>
            <person name="Sayers B."/>
            <person name="Sardone I."/>
            <person name="Jones M.B."/>
            <person name="Fleischmann R.D."/>
            <person name="Peterson S.N."/>
            <person name="Jacobs W.R. Jr."/>
            <person name="Alland D."/>
        </authorList>
    </citation>
    <scope>INDUCTION</scope>
    <source>
        <strain>ATCC 25618 / H37Rv</strain>
    </source>
</reference>
<reference key="4">
    <citation type="journal article" date="2011" name="Mol. Cell. Proteomics">
        <title>Proteogenomic analysis of Mycobacterium tuberculosis by high resolution mass spectrometry.</title>
        <authorList>
            <person name="Kelkar D.S."/>
            <person name="Kumar D."/>
            <person name="Kumar P."/>
            <person name="Balakrishnan L."/>
            <person name="Muthusamy B."/>
            <person name="Yadav A.K."/>
            <person name="Shrivastava P."/>
            <person name="Marimuthu A."/>
            <person name="Anand S."/>
            <person name="Sundaram H."/>
            <person name="Kingsbury R."/>
            <person name="Harsha H.C."/>
            <person name="Nair B."/>
            <person name="Prasad T.S."/>
            <person name="Chauhan D.S."/>
            <person name="Katoch K."/>
            <person name="Katoch V.M."/>
            <person name="Kumar P."/>
            <person name="Chaerkady R."/>
            <person name="Ramachandran S."/>
            <person name="Dash D."/>
            <person name="Pandey A."/>
        </authorList>
    </citation>
    <scope>IDENTIFICATION BY MASS SPECTROMETRY [LARGE SCALE ANALYSIS]</scope>
    <source>
        <strain>ATCC 25618 / H37Rv</strain>
    </source>
</reference>
<comment type="induction">
    <text evidence="1 2">Specifically induced by a broad range of inhibitors of cell wall biosynthesis, including antibiotics that inhibit the synthesis of peptidoglycan (ampicillin), arabinogalactam (ethambutol), mycolic acids (isoniazid, ethionamide) and fatty acids (5-chloropyrazinamide). Down-regulated by the nucleoid-associated protein Lsr2.</text>
</comment>
<proteinExistence type="evidence at protein level"/>